<keyword id="KW-0046">Antibiotic resistance</keyword>
<keyword id="KW-0997">Cell inner membrane</keyword>
<keyword id="KW-1003">Cell membrane</keyword>
<keyword id="KW-0133">Cell shape</keyword>
<keyword id="KW-0961">Cell wall biogenesis/degradation</keyword>
<keyword id="KW-0378">Hydrolase</keyword>
<keyword id="KW-0472">Membrane</keyword>
<keyword id="KW-0573">Peptidoglycan synthesis</keyword>
<keyword id="KW-1185">Reference proteome</keyword>
<keyword id="KW-0812">Transmembrane</keyword>
<keyword id="KW-1133">Transmembrane helix</keyword>
<organism>
    <name type="scientific">Afipia carboxidovorans (strain ATCC 49405 / DSM 1227 / KCTC 32145 / OM5)</name>
    <name type="common">Oligotropha carboxidovorans</name>
    <dbReference type="NCBI Taxonomy" id="504832"/>
    <lineage>
        <taxon>Bacteria</taxon>
        <taxon>Pseudomonadati</taxon>
        <taxon>Pseudomonadota</taxon>
        <taxon>Alphaproteobacteria</taxon>
        <taxon>Hyphomicrobiales</taxon>
        <taxon>Nitrobacteraceae</taxon>
        <taxon>Afipia</taxon>
    </lineage>
</organism>
<gene>
    <name evidence="1" type="primary">uppP</name>
    <name type="ordered locus">OCAR_4447</name>
    <name type="ordered locus">OCA5_c00850</name>
</gene>
<reference key="1">
    <citation type="journal article" date="2008" name="J. Bacteriol.">
        <title>Genome sequence of the chemolithoautotrophic bacterium Oligotropha carboxidovorans OM5T.</title>
        <authorList>
            <person name="Paul D."/>
            <person name="Bridges S."/>
            <person name="Burgess S.C."/>
            <person name="Dandass Y."/>
            <person name="Lawrence M.L."/>
        </authorList>
    </citation>
    <scope>NUCLEOTIDE SEQUENCE [LARGE SCALE GENOMIC DNA]</scope>
    <source>
        <strain>ATCC 49405 / DSM 1227 / KCTC 32145 / OM5</strain>
    </source>
</reference>
<reference key="2">
    <citation type="journal article" date="2011" name="J. Bacteriol.">
        <title>Complete genome sequences of the chemolithoautotrophic Oligotropha carboxidovorans strains OM4 and OM5.</title>
        <authorList>
            <person name="Volland S."/>
            <person name="Rachinger M."/>
            <person name="Strittmatter A."/>
            <person name="Daniel R."/>
            <person name="Gottschalk G."/>
            <person name="Meyer O."/>
        </authorList>
    </citation>
    <scope>NUCLEOTIDE SEQUENCE [LARGE SCALE GENOMIC DNA]</scope>
    <source>
        <strain>ATCC 49405 / DSM 1227 / KCTC 32145 / OM5</strain>
    </source>
</reference>
<protein>
    <recommendedName>
        <fullName evidence="1">Undecaprenyl-diphosphatase</fullName>
        <ecNumber evidence="1">3.6.1.27</ecNumber>
    </recommendedName>
    <alternativeName>
        <fullName evidence="1">Bacitracin resistance protein</fullName>
    </alternativeName>
    <alternativeName>
        <fullName evidence="1">Undecaprenyl pyrophosphate phosphatase</fullName>
    </alternativeName>
</protein>
<sequence length="268" mass="29408">MLFDLFKALVLGIVEGVTEFLPVSSTGHILLAERIFDLDQDNFWKTFAVLIQLGAILAILAIYFQRLWRVATHMFTDPAARRFVIGVLVAFLPAVILGLIFGTFIKEVLFNPWVVCFSLIAGGAVLLWVDQQDVNPRHHDAMAFPLPMYLGIGIAQCAAMVPGVSRSGASIVAAMLFGADKRAAAEFSFFLAIPTMLGAFVYDVYKSRGDMTMDHAFIIIVGFVVSFITAIVVVKTFLDFVTKNGFTFFAWWRVIVGTLGLIALALGA</sequence>
<dbReference type="EC" id="3.6.1.27" evidence="1"/>
<dbReference type="EMBL" id="CP001196">
    <property type="protein sequence ID" value="ACI91593.1"/>
    <property type="molecule type" value="Genomic_DNA"/>
</dbReference>
<dbReference type="EMBL" id="CP002826">
    <property type="protein sequence ID" value="AEI04817.1"/>
    <property type="molecule type" value="Genomic_DNA"/>
</dbReference>
<dbReference type="RefSeq" id="WP_012561624.1">
    <property type="nucleotide sequence ID" value="NC_015684.1"/>
</dbReference>
<dbReference type="SMR" id="B6JCL3"/>
<dbReference type="STRING" id="504832.OCA5_c00850"/>
<dbReference type="KEGG" id="oca:OCAR_4447"/>
<dbReference type="KEGG" id="ocg:OCA5_c00850"/>
<dbReference type="PATRIC" id="fig|504832.7.peg.89"/>
<dbReference type="eggNOG" id="COG1968">
    <property type="taxonomic scope" value="Bacteria"/>
</dbReference>
<dbReference type="HOGENOM" id="CLU_060296_2_0_5"/>
<dbReference type="OrthoDB" id="9808289at2"/>
<dbReference type="Proteomes" id="UP000007730">
    <property type="component" value="Chromosome"/>
</dbReference>
<dbReference type="GO" id="GO:0005886">
    <property type="term" value="C:plasma membrane"/>
    <property type="evidence" value="ECO:0007669"/>
    <property type="project" value="UniProtKB-SubCell"/>
</dbReference>
<dbReference type="GO" id="GO:0050380">
    <property type="term" value="F:undecaprenyl-diphosphatase activity"/>
    <property type="evidence" value="ECO:0007669"/>
    <property type="project" value="UniProtKB-UniRule"/>
</dbReference>
<dbReference type="GO" id="GO:0071555">
    <property type="term" value="P:cell wall organization"/>
    <property type="evidence" value="ECO:0007669"/>
    <property type="project" value="UniProtKB-KW"/>
</dbReference>
<dbReference type="GO" id="GO:0009252">
    <property type="term" value="P:peptidoglycan biosynthetic process"/>
    <property type="evidence" value="ECO:0007669"/>
    <property type="project" value="UniProtKB-KW"/>
</dbReference>
<dbReference type="GO" id="GO:0008360">
    <property type="term" value="P:regulation of cell shape"/>
    <property type="evidence" value="ECO:0007669"/>
    <property type="project" value="UniProtKB-KW"/>
</dbReference>
<dbReference type="GO" id="GO:0046677">
    <property type="term" value="P:response to antibiotic"/>
    <property type="evidence" value="ECO:0007669"/>
    <property type="project" value="UniProtKB-UniRule"/>
</dbReference>
<dbReference type="HAMAP" id="MF_01006">
    <property type="entry name" value="Undec_diphosphatase"/>
    <property type="match status" value="1"/>
</dbReference>
<dbReference type="InterPro" id="IPR003824">
    <property type="entry name" value="UppP"/>
</dbReference>
<dbReference type="NCBIfam" id="NF001389">
    <property type="entry name" value="PRK00281.1-2"/>
    <property type="match status" value="1"/>
</dbReference>
<dbReference type="NCBIfam" id="NF001390">
    <property type="entry name" value="PRK00281.1-4"/>
    <property type="match status" value="1"/>
</dbReference>
<dbReference type="NCBIfam" id="TIGR00753">
    <property type="entry name" value="undec_PP_bacA"/>
    <property type="match status" value="1"/>
</dbReference>
<dbReference type="PANTHER" id="PTHR30622">
    <property type="entry name" value="UNDECAPRENYL-DIPHOSPHATASE"/>
    <property type="match status" value="1"/>
</dbReference>
<dbReference type="PANTHER" id="PTHR30622:SF3">
    <property type="entry name" value="UNDECAPRENYL-DIPHOSPHATASE"/>
    <property type="match status" value="1"/>
</dbReference>
<dbReference type="Pfam" id="PF02673">
    <property type="entry name" value="BacA"/>
    <property type="match status" value="1"/>
</dbReference>
<comment type="function">
    <text evidence="1">Catalyzes the dephosphorylation of undecaprenyl diphosphate (UPP). Confers resistance to bacitracin.</text>
</comment>
<comment type="catalytic activity">
    <reaction evidence="1">
        <text>di-trans,octa-cis-undecaprenyl diphosphate + H2O = di-trans,octa-cis-undecaprenyl phosphate + phosphate + H(+)</text>
        <dbReference type="Rhea" id="RHEA:28094"/>
        <dbReference type="ChEBI" id="CHEBI:15377"/>
        <dbReference type="ChEBI" id="CHEBI:15378"/>
        <dbReference type="ChEBI" id="CHEBI:43474"/>
        <dbReference type="ChEBI" id="CHEBI:58405"/>
        <dbReference type="ChEBI" id="CHEBI:60392"/>
        <dbReference type="EC" id="3.6.1.27"/>
    </reaction>
</comment>
<comment type="subcellular location">
    <subcellularLocation>
        <location evidence="1">Cell inner membrane</location>
        <topology evidence="1">Multi-pass membrane protein</topology>
    </subcellularLocation>
</comment>
<comment type="miscellaneous">
    <text>Bacitracin is thought to be involved in the inhibition of peptidoglycan synthesis by sequestering undecaprenyl diphosphate, thereby reducing the pool of lipid carrier available.</text>
</comment>
<comment type="similarity">
    <text evidence="1">Belongs to the UppP family.</text>
</comment>
<feature type="chain" id="PRO_1000197385" description="Undecaprenyl-diphosphatase">
    <location>
        <begin position="1"/>
        <end position="268"/>
    </location>
</feature>
<feature type="transmembrane region" description="Helical" evidence="1">
    <location>
        <begin position="43"/>
        <end position="63"/>
    </location>
</feature>
<feature type="transmembrane region" description="Helical" evidence="1">
    <location>
        <begin position="85"/>
        <end position="105"/>
    </location>
</feature>
<feature type="transmembrane region" description="Helical" evidence="1">
    <location>
        <begin position="108"/>
        <end position="128"/>
    </location>
</feature>
<feature type="transmembrane region" description="Helical" evidence="1">
    <location>
        <begin position="141"/>
        <end position="161"/>
    </location>
</feature>
<feature type="transmembrane region" description="Helical" evidence="1">
    <location>
        <begin position="184"/>
        <end position="204"/>
    </location>
</feature>
<feature type="transmembrane region" description="Helical" evidence="1">
    <location>
        <begin position="217"/>
        <end position="237"/>
    </location>
</feature>
<feature type="transmembrane region" description="Helical" evidence="1">
    <location>
        <begin position="246"/>
        <end position="266"/>
    </location>
</feature>
<evidence type="ECO:0000255" key="1">
    <source>
        <dbReference type="HAMAP-Rule" id="MF_01006"/>
    </source>
</evidence>
<accession>B6JCL3</accession>
<accession>F8C0B8</accession>
<name>UPPP_AFIC5</name>
<proteinExistence type="inferred from homology"/>